<organism>
    <name type="scientific">Camellia ptilophylla</name>
    <name type="common">Cocoa tea</name>
    <dbReference type="NCBI Taxonomy" id="319931"/>
    <lineage>
        <taxon>Eukaryota</taxon>
        <taxon>Viridiplantae</taxon>
        <taxon>Streptophyta</taxon>
        <taxon>Embryophyta</taxon>
        <taxon>Tracheophyta</taxon>
        <taxon>Spermatophyta</taxon>
        <taxon>Magnoliopsida</taxon>
        <taxon>eudicotyledons</taxon>
        <taxon>Gunneridae</taxon>
        <taxon>Pentapetalae</taxon>
        <taxon>asterids</taxon>
        <taxon>Ericales</taxon>
        <taxon>Theaceae</taxon>
        <taxon>Camellia</taxon>
    </lineage>
</organism>
<keyword id="KW-0460">Magnesium</keyword>
<keyword id="KW-0479">Metal-binding</keyword>
<keyword id="KW-0489">Methyltransferase</keyword>
<keyword id="KW-0808">Transferase</keyword>
<protein>
    <recommendedName>
        <fullName evidence="7">7-methylxanthine methyltransferase PCS1</fullName>
        <shortName evidence="8">TCS1c</shortName>
        <ecNumber evidence="5 6">2.1.1.159</ecNumber>
    </recommendedName>
    <alternativeName>
        <fullName evidence="7">Theobromine synthase PCS1</fullName>
    </alternativeName>
</protein>
<gene>
    <name evidence="7" type="primary">PCS1</name>
    <name evidence="8" type="synonym">TCS1C</name>
</gene>
<dbReference type="EC" id="2.1.1.159" evidence="5 6"/>
<dbReference type="EMBL" id="AB207817">
    <property type="protein sequence ID" value="BAE79732.1"/>
    <property type="molecule type" value="mRNA"/>
</dbReference>
<dbReference type="SMR" id="Q2HXI6"/>
<dbReference type="BRENDA" id="2.1.1.160">
    <property type="organism ID" value="8605"/>
</dbReference>
<dbReference type="GO" id="GO:0046872">
    <property type="term" value="F:metal ion binding"/>
    <property type="evidence" value="ECO:0007669"/>
    <property type="project" value="UniProtKB-KW"/>
</dbReference>
<dbReference type="GO" id="GO:0008168">
    <property type="term" value="F:methyltransferase activity"/>
    <property type="evidence" value="ECO:0007669"/>
    <property type="project" value="UniProtKB-KW"/>
</dbReference>
<dbReference type="GO" id="GO:0032259">
    <property type="term" value="P:methylation"/>
    <property type="evidence" value="ECO:0007669"/>
    <property type="project" value="UniProtKB-KW"/>
</dbReference>
<dbReference type="Gene3D" id="1.10.1200.270">
    <property type="entry name" value="Methyltransferase, alpha-helical capping domain"/>
    <property type="match status" value="1"/>
</dbReference>
<dbReference type="Gene3D" id="3.40.50.150">
    <property type="entry name" value="Vaccinia Virus protein VP39"/>
    <property type="match status" value="1"/>
</dbReference>
<dbReference type="InterPro" id="IPR005299">
    <property type="entry name" value="MeTrfase_7"/>
</dbReference>
<dbReference type="InterPro" id="IPR042086">
    <property type="entry name" value="MeTrfase_capping"/>
</dbReference>
<dbReference type="InterPro" id="IPR029063">
    <property type="entry name" value="SAM-dependent_MTases_sf"/>
</dbReference>
<dbReference type="PANTHER" id="PTHR31009">
    <property type="entry name" value="S-ADENOSYL-L-METHIONINE:CARBOXYL METHYLTRANSFERASE FAMILY PROTEIN"/>
    <property type="match status" value="1"/>
</dbReference>
<dbReference type="Pfam" id="PF03492">
    <property type="entry name" value="Methyltransf_7"/>
    <property type="match status" value="1"/>
</dbReference>
<dbReference type="SUPFAM" id="SSF53335">
    <property type="entry name" value="S-adenosyl-L-methionine-dependent methyltransferases"/>
    <property type="match status" value="1"/>
</dbReference>
<evidence type="ECO:0000250" key="1">
    <source>
        <dbReference type="UniProtKB" id="A0A6C0WW36"/>
    </source>
</evidence>
<evidence type="ECO:0000250" key="2">
    <source>
        <dbReference type="UniProtKB" id="Q2HXL9"/>
    </source>
</evidence>
<evidence type="ECO:0000250" key="3">
    <source>
        <dbReference type="UniProtKB" id="Q9FLN8"/>
    </source>
</evidence>
<evidence type="ECO:0000250" key="4">
    <source>
        <dbReference type="UniProtKB" id="Q9FZN8"/>
    </source>
</evidence>
<evidence type="ECO:0000269" key="5">
    <source>
    </source>
</evidence>
<evidence type="ECO:0000269" key="6">
    <source>
    </source>
</evidence>
<evidence type="ECO:0000303" key="7">
    <source>
    </source>
</evidence>
<evidence type="ECO:0000303" key="8">
    <source>
    </source>
</evidence>
<evidence type="ECO:0000305" key="9"/>
<accession>Q2HXI6</accession>
<proteinExistence type="evidence at protein level"/>
<reference key="1">
    <citation type="journal article" date="2006" name="Mol. Genet. Genomics">
        <title>Substrate specificity of N-methyltransferase involved in purine alkaloids synthesis is dependent upon one amino acid residue of the enzyme.</title>
        <authorList>
            <person name="Yoneyama N."/>
            <person name="Morimoto H."/>
            <person name="Ye C.-X."/>
            <person name="Ashihara H."/>
            <person name="Mizuno K."/>
            <person name="Kato M."/>
        </authorList>
    </citation>
    <scope>NUCLEOTIDE SEQUENCE [MRNA]</scope>
    <scope>FUNCTION</scope>
    <scope>MUTAGENESIS OF HIS-221; SER-225 AND GLU-232</scope>
    <scope>CATALYTIC ACTIVITY</scope>
    <scope>PATHWAY</scope>
    <scope>BIOPHYSICOCHEMICAL PROPERTIES</scope>
</reference>
<reference key="2">
    <citation type="journal article" date="2016" name="Plant Physiol. Biochem.">
        <title>Natural allelic variations of TCS1 play a crucial role in caffeine biosynthesis of tea plant and its related species.</title>
        <authorList>
            <person name="Jin J.-Q."/>
            <person name="Yao M.-Z."/>
            <person name="Ma C.-L."/>
            <person name="Ma J.-Q."/>
            <person name="Chen L."/>
        </authorList>
    </citation>
    <scope>GENE FAMILY</scope>
    <scope>NOMENCLATURE</scope>
</reference>
<reference key="3">
    <citation type="journal article" date="2018" name="J. Agric. Food Chem.">
        <title>Hongyacha, a naturally caffeine-free tea plant from Fujian, China.</title>
        <authorList>
            <person name="Jin J.Q."/>
            <person name="Chai Y.F."/>
            <person name="Liu Y.F."/>
            <person name="Zhang J."/>
            <person name="Yao M.Z."/>
            <person name="Chen L."/>
        </authorList>
    </citation>
    <scope>FUNCTION</scope>
    <scope>CATALYTIC ACTIVITY</scope>
</reference>
<name>PCS1_CAMPL</name>
<comment type="function">
    <text evidence="5 6">Involved in the biosynthesis of caffeine (PubMed:16333668, PubMed:30303011). Catalyzes the conversion of 7-methylxanthine (7mX) to theobromine, and, to some extent, the conversion of paraxanthine to caffeine, but seems not able to convert theobromine to caffeine (PubMed:16333668, PubMed:30303011).</text>
</comment>
<comment type="catalytic activity">
    <reaction evidence="5">
        <text>1,7-dimethylxanthine + S-adenosyl-L-methionine = caffeine + S-adenosyl-L-homocysteine + H(+)</text>
        <dbReference type="Rhea" id="RHEA:10280"/>
        <dbReference type="ChEBI" id="CHEBI:15378"/>
        <dbReference type="ChEBI" id="CHEBI:25858"/>
        <dbReference type="ChEBI" id="CHEBI:27732"/>
        <dbReference type="ChEBI" id="CHEBI:57856"/>
        <dbReference type="ChEBI" id="CHEBI:59789"/>
    </reaction>
    <physiologicalReaction direction="left-to-right" evidence="2">
        <dbReference type="Rhea" id="RHEA:10281"/>
    </physiologicalReaction>
</comment>
<comment type="catalytic activity">
    <reaction evidence="5 6">
        <text>7-methylxanthine + S-adenosyl-L-methionine = theobromine + S-adenosyl-L-homocysteine + H(+)</text>
        <dbReference type="Rhea" id="RHEA:24604"/>
        <dbReference type="ChEBI" id="CHEBI:15378"/>
        <dbReference type="ChEBI" id="CHEBI:28946"/>
        <dbReference type="ChEBI" id="CHEBI:48991"/>
        <dbReference type="ChEBI" id="CHEBI:57856"/>
        <dbReference type="ChEBI" id="CHEBI:59789"/>
        <dbReference type="EC" id="2.1.1.159"/>
    </reaction>
    <physiologicalReaction direction="left-to-right" evidence="5">
        <dbReference type="Rhea" id="RHEA:24605"/>
    </physiologicalReaction>
</comment>
<comment type="cofactor">
    <cofactor evidence="3">
        <name>Mg(2+)</name>
        <dbReference type="ChEBI" id="CHEBI:18420"/>
    </cofactor>
    <text evidence="3">Binds 1 Mg(2+) ion per subunit.</text>
</comment>
<comment type="biophysicochemical properties">
    <kinetics>
        <KM evidence="5">85 uM for 7-methylxanthine (in the presence of 50 uM S-adenosyl-L-methionine)</KM>
    </kinetics>
    <phDependence>
        <text evidence="5">Optimum pH is 8.0-8.5.</text>
    </phDependence>
</comment>
<comment type="pathway">
    <text evidence="5">Alkaloid biosynthesis.</text>
</comment>
<comment type="similarity">
    <text evidence="9">Belongs to the methyltransferase superfamily. Type-7 methyltransferase family.</text>
</comment>
<feature type="chain" id="PRO_0000451790" description="7-methylxanthine methyltransferase PCS1">
    <location>
        <begin position="1"/>
        <end position="365"/>
    </location>
</feature>
<feature type="binding site" evidence="1">
    <location>
        <position position="19"/>
    </location>
    <ligand>
        <name>S-adenosyl-L-homocysteine</name>
        <dbReference type="ChEBI" id="CHEBI:57856"/>
    </ligand>
</feature>
<feature type="binding site" evidence="1">
    <location>
        <position position="26"/>
    </location>
    <ligand>
        <name>caffeine</name>
        <dbReference type="ChEBI" id="CHEBI:27732"/>
    </ligand>
</feature>
<feature type="binding site" evidence="1">
    <location>
        <position position="62"/>
    </location>
    <ligand>
        <name>S-adenosyl-L-homocysteine</name>
        <dbReference type="ChEBI" id="CHEBI:57856"/>
    </ligand>
</feature>
<feature type="binding site" evidence="1">
    <location>
        <position position="67"/>
    </location>
    <ligand>
        <name>S-adenosyl-L-homocysteine</name>
        <dbReference type="ChEBI" id="CHEBI:57856"/>
    </ligand>
</feature>
<feature type="binding site" evidence="1">
    <location>
        <position position="99"/>
    </location>
    <ligand>
        <name>S-adenosyl-L-homocysteine</name>
        <dbReference type="ChEBI" id="CHEBI:57856"/>
    </ligand>
</feature>
<feature type="binding site" evidence="1">
    <location>
        <position position="100"/>
    </location>
    <ligand>
        <name>S-adenosyl-L-homocysteine</name>
        <dbReference type="ChEBI" id="CHEBI:57856"/>
    </ligand>
</feature>
<feature type="binding site" evidence="1">
    <location>
        <position position="134"/>
    </location>
    <ligand>
        <name>S-adenosyl-L-homocysteine</name>
        <dbReference type="ChEBI" id="CHEBI:57856"/>
    </ligand>
</feature>
<feature type="binding site" evidence="1">
    <location>
        <position position="135"/>
    </location>
    <ligand>
        <name>S-adenosyl-L-homocysteine</name>
        <dbReference type="ChEBI" id="CHEBI:57856"/>
    </ligand>
</feature>
<feature type="binding site" evidence="1">
    <location>
        <position position="152"/>
    </location>
    <ligand>
        <name>caffeine</name>
        <dbReference type="ChEBI" id="CHEBI:27732"/>
    </ligand>
</feature>
<feature type="binding site" evidence="1">
    <location>
        <position position="155"/>
    </location>
    <ligand>
        <name>caffeine</name>
        <dbReference type="ChEBI" id="CHEBI:27732"/>
    </ligand>
</feature>
<feature type="binding site" evidence="1">
    <location>
        <position position="156"/>
    </location>
    <ligand>
        <name>caffeine</name>
        <dbReference type="ChEBI" id="CHEBI:27732"/>
    </ligand>
</feature>
<feature type="binding site" evidence="3">
    <location>
        <position position="173"/>
    </location>
    <ligand>
        <name>Mg(2+)</name>
        <dbReference type="ChEBI" id="CHEBI:18420"/>
    </ligand>
</feature>
<feature type="binding site" evidence="1">
    <location>
        <position position="221"/>
    </location>
    <ligand>
        <name>caffeine</name>
        <dbReference type="ChEBI" id="CHEBI:27732"/>
    </ligand>
</feature>
<feature type="binding site" evidence="3">
    <location>
        <position position="259"/>
    </location>
    <ligand>
        <name>Mg(2+)</name>
        <dbReference type="ChEBI" id="CHEBI:18420"/>
    </ligand>
</feature>
<feature type="binding site" evidence="3">
    <location>
        <position position="261"/>
    </location>
    <ligand>
        <name>Mg(2+)</name>
        <dbReference type="ChEBI" id="CHEBI:18420"/>
    </ligand>
</feature>
<feature type="binding site" evidence="3">
    <location>
        <position position="262"/>
    </location>
    <ligand>
        <name>Mg(2+)</name>
        <dbReference type="ChEBI" id="CHEBI:18420"/>
    </ligand>
</feature>
<feature type="binding site" evidence="1">
    <location>
        <position position="317"/>
    </location>
    <ligand>
        <name>caffeine</name>
        <dbReference type="ChEBI" id="CHEBI:27732"/>
    </ligand>
</feature>
<feature type="site" description="Involved in substrate discrimination" evidence="4">
    <location>
        <position position="149"/>
    </location>
</feature>
<feature type="site" description="Involved in substrate discrimination" evidence="5">
    <location>
        <position position="221"/>
    </location>
</feature>
<feature type="site" description="Involved in substrate discrimination" evidence="4">
    <location>
        <position position="265"/>
    </location>
</feature>
<feature type="site" description="Involved in substrate discrimination" evidence="4">
    <location>
        <position position="313"/>
    </location>
</feature>
<feature type="site" description="Involved in substrate discrimination" evidence="4">
    <location>
        <position position="328"/>
    </location>
</feature>
<feature type="mutagenesis site" description="Normal theobromine synthase activity. Increased caffeine synthase activity with paraxanthine as substrate." evidence="5">
    <original>H</original>
    <variation>R</variation>
    <location>
        <position position="221"/>
    </location>
</feature>
<feature type="mutagenesis site" description="Normal theobromine synthase activity. Slighty decreased caffeine synthase activity with paraxanthine as substrate." evidence="5">
    <original>S</original>
    <variation>C</variation>
    <location>
        <position position="225"/>
    </location>
</feature>
<feature type="mutagenesis site" description="Normal theobromine synthase activity. Slighty decreased caffeine synthase activity with paraxanthine as substrate." evidence="5">
    <original>E</original>
    <variation>Q</variation>
    <location>
        <position position="232"/>
    </location>
</feature>
<sequence>MGKVNEVLFMNRGEGEISYAQNSAFTQKVASMAMPALENAVETLFSKDFHLLQALTAADLGCAAGPNTFAVISTIKRMMEKKCRELYCQTLELQVYLNDLFGNDFNTLFKGLSSQVVGNKCEEVSCYVMGVPGSFHGRLFPRNSLHLVHSSYSVHWLTQAPKGLTSREGLALNKGKIYISKTSPPVVKKAYLSQFHEDFTMFLNARSQEVVPNGCMVLILHGRQSSDPSEMESCFTWELLAIAIAELVSQGLIDKDKLDTFNVPSYWPSLEEVKDIVERDGSFTIDHLEGFELDSLEMQEDDKWVRGDKFAKMVRAFTEPIISNQFGQEIMDKLYDKFTHILVSDLEAELPKTTSIILVLSKIVG</sequence>